<dbReference type="EC" id="2.5.1.75" evidence="1"/>
<dbReference type="EMBL" id="CP000097">
    <property type="protein sequence ID" value="ABB25107.1"/>
    <property type="molecule type" value="Genomic_DNA"/>
</dbReference>
<dbReference type="RefSeq" id="WP_011358974.1">
    <property type="nucleotide sequence ID" value="NC_007513.1"/>
</dbReference>
<dbReference type="SMR" id="Q3B0M1"/>
<dbReference type="STRING" id="316279.Syncc9902_0132"/>
<dbReference type="KEGG" id="sye:Syncc9902_0132"/>
<dbReference type="eggNOG" id="COG0324">
    <property type="taxonomic scope" value="Bacteria"/>
</dbReference>
<dbReference type="HOGENOM" id="CLU_032616_0_1_3"/>
<dbReference type="OrthoDB" id="9776390at2"/>
<dbReference type="Proteomes" id="UP000002712">
    <property type="component" value="Chromosome"/>
</dbReference>
<dbReference type="GO" id="GO:0005524">
    <property type="term" value="F:ATP binding"/>
    <property type="evidence" value="ECO:0007669"/>
    <property type="project" value="UniProtKB-UniRule"/>
</dbReference>
<dbReference type="GO" id="GO:0052381">
    <property type="term" value="F:tRNA dimethylallyltransferase activity"/>
    <property type="evidence" value="ECO:0007669"/>
    <property type="project" value="UniProtKB-UniRule"/>
</dbReference>
<dbReference type="GO" id="GO:0006400">
    <property type="term" value="P:tRNA modification"/>
    <property type="evidence" value="ECO:0007669"/>
    <property type="project" value="TreeGrafter"/>
</dbReference>
<dbReference type="Gene3D" id="1.10.20.140">
    <property type="match status" value="1"/>
</dbReference>
<dbReference type="Gene3D" id="3.40.50.300">
    <property type="entry name" value="P-loop containing nucleotide triphosphate hydrolases"/>
    <property type="match status" value="1"/>
</dbReference>
<dbReference type="HAMAP" id="MF_00185">
    <property type="entry name" value="IPP_trans"/>
    <property type="match status" value="1"/>
</dbReference>
<dbReference type="InterPro" id="IPR039657">
    <property type="entry name" value="Dimethylallyltransferase"/>
</dbReference>
<dbReference type="InterPro" id="IPR018022">
    <property type="entry name" value="IPT"/>
</dbReference>
<dbReference type="InterPro" id="IPR027417">
    <property type="entry name" value="P-loop_NTPase"/>
</dbReference>
<dbReference type="NCBIfam" id="TIGR00174">
    <property type="entry name" value="miaA"/>
    <property type="match status" value="1"/>
</dbReference>
<dbReference type="PANTHER" id="PTHR11088">
    <property type="entry name" value="TRNA DIMETHYLALLYLTRANSFERASE"/>
    <property type="match status" value="1"/>
</dbReference>
<dbReference type="PANTHER" id="PTHR11088:SF60">
    <property type="entry name" value="TRNA DIMETHYLALLYLTRANSFERASE"/>
    <property type="match status" value="1"/>
</dbReference>
<dbReference type="Pfam" id="PF01715">
    <property type="entry name" value="IPPT"/>
    <property type="match status" value="1"/>
</dbReference>
<dbReference type="SUPFAM" id="SSF52540">
    <property type="entry name" value="P-loop containing nucleoside triphosphate hydrolases"/>
    <property type="match status" value="2"/>
</dbReference>
<organism>
    <name type="scientific">Synechococcus sp. (strain CC9902)</name>
    <dbReference type="NCBI Taxonomy" id="316279"/>
    <lineage>
        <taxon>Bacteria</taxon>
        <taxon>Bacillati</taxon>
        <taxon>Cyanobacteriota</taxon>
        <taxon>Cyanophyceae</taxon>
        <taxon>Synechococcales</taxon>
        <taxon>Synechococcaceae</taxon>
        <taxon>Synechococcus</taxon>
    </lineage>
</organism>
<protein>
    <recommendedName>
        <fullName evidence="1">tRNA dimethylallyltransferase</fullName>
        <ecNumber evidence="1">2.5.1.75</ecNumber>
    </recommendedName>
    <alternativeName>
        <fullName evidence="1">Dimethylallyl diphosphate:tRNA dimethylallyltransferase</fullName>
        <shortName evidence="1">DMAPP:tRNA dimethylallyltransferase</shortName>
        <shortName evidence="1">DMATase</shortName>
    </alternativeName>
    <alternativeName>
        <fullName evidence="1">Isopentenyl-diphosphate:tRNA isopentenyltransferase</fullName>
        <shortName evidence="1">IPP transferase</shortName>
        <shortName evidence="1">IPPT</shortName>
        <shortName evidence="1">IPTase</shortName>
    </alternativeName>
</protein>
<accession>Q3B0M1</accession>
<comment type="function">
    <text evidence="1">Catalyzes the transfer of a dimethylallyl group onto the adenine at position 37 in tRNAs that read codons beginning with uridine, leading to the formation of N6-(dimethylallyl)adenosine (i(6)A).</text>
</comment>
<comment type="catalytic activity">
    <reaction evidence="1">
        <text>adenosine(37) in tRNA + dimethylallyl diphosphate = N(6)-dimethylallyladenosine(37) in tRNA + diphosphate</text>
        <dbReference type="Rhea" id="RHEA:26482"/>
        <dbReference type="Rhea" id="RHEA-COMP:10162"/>
        <dbReference type="Rhea" id="RHEA-COMP:10375"/>
        <dbReference type="ChEBI" id="CHEBI:33019"/>
        <dbReference type="ChEBI" id="CHEBI:57623"/>
        <dbReference type="ChEBI" id="CHEBI:74411"/>
        <dbReference type="ChEBI" id="CHEBI:74415"/>
        <dbReference type="EC" id="2.5.1.75"/>
    </reaction>
</comment>
<comment type="cofactor">
    <cofactor evidence="1">
        <name>Mg(2+)</name>
        <dbReference type="ChEBI" id="CHEBI:18420"/>
    </cofactor>
</comment>
<comment type="subunit">
    <text evidence="1">Monomer.</text>
</comment>
<comment type="similarity">
    <text evidence="1">Belongs to the IPP transferase family.</text>
</comment>
<feature type="chain" id="PRO_0000377345" description="tRNA dimethylallyltransferase">
    <location>
        <begin position="1"/>
        <end position="298"/>
    </location>
</feature>
<feature type="region of interest" description="Interaction with substrate tRNA" evidence="1">
    <location>
        <begin position="37"/>
        <end position="40"/>
    </location>
</feature>
<feature type="binding site" evidence="1">
    <location>
        <begin position="12"/>
        <end position="19"/>
    </location>
    <ligand>
        <name>ATP</name>
        <dbReference type="ChEBI" id="CHEBI:30616"/>
    </ligand>
</feature>
<feature type="binding site" evidence="1">
    <location>
        <begin position="14"/>
        <end position="19"/>
    </location>
    <ligand>
        <name>substrate</name>
    </ligand>
</feature>
<feature type="site" description="Interaction with substrate tRNA" evidence="1">
    <location>
        <position position="103"/>
    </location>
</feature>
<reference key="1">
    <citation type="submission" date="2005-08" db="EMBL/GenBank/DDBJ databases">
        <title>Complete sequence of Synechococcus sp. CC9902.</title>
        <authorList>
            <person name="Copeland A."/>
            <person name="Lucas S."/>
            <person name="Lapidus A."/>
            <person name="Barry K."/>
            <person name="Detter J.C."/>
            <person name="Glavina T."/>
            <person name="Hammon N."/>
            <person name="Israni S."/>
            <person name="Pitluck S."/>
            <person name="Martinez M."/>
            <person name="Schmutz J."/>
            <person name="Larimer F."/>
            <person name="Land M."/>
            <person name="Kyrpides N."/>
            <person name="Ivanova N."/>
            <person name="Richardson P."/>
        </authorList>
    </citation>
    <scope>NUCLEOTIDE SEQUENCE [LARGE SCALE GENOMIC DNA]</scope>
    <source>
        <strain>CC9902</strain>
    </source>
</reference>
<keyword id="KW-0067">ATP-binding</keyword>
<keyword id="KW-0460">Magnesium</keyword>
<keyword id="KW-0547">Nucleotide-binding</keyword>
<keyword id="KW-1185">Reference proteome</keyword>
<keyword id="KW-0808">Transferase</keyword>
<keyword id="KW-0819">tRNA processing</keyword>
<proteinExistence type="inferred from homology"/>
<evidence type="ECO:0000255" key="1">
    <source>
        <dbReference type="HAMAP-Rule" id="MF_00185"/>
    </source>
</evidence>
<name>MIAA_SYNS9</name>
<gene>
    <name evidence="1" type="primary">miaA</name>
    <name type="ordered locus">Syncc9902_0132</name>
</gene>
<sequence length="298" mass="32831">MSTQPLVITLLGPTASGKTALALELAERLGLPVINVDSRQLYREMDVGTAKPTAEQQARVTHHLLDLRDPNQPITLQEFQAEATPCIERELSERGIALLVGGSGLYLKALTSGLKPPAVGPQPELRKQFSAMGQAVCHPLLAAADPIAAAKISPADVVRTQRALEVLYASGQPMSGQASVEPPPWRILELGLNPTNLRQRINQRTEQLYQDGLVEETQRLADRYGADLPLLQTIGYGEALQINDGSITRQAAIATTCQRTRQFAKRQRTWFRRQHTPQWLSEQDLLTEAMTLIEQHLG</sequence>